<protein>
    <recommendedName>
        <fullName>Mitochondrial inner membrane protease subunit 2</fullName>
        <ecNumber>3.4.21.-</ecNumber>
    </recommendedName>
</protein>
<gene>
    <name type="ORF">SPBC336.13c</name>
</gene>
<feature type="chain" id="PRO_0000259581" description="Mitochondrial inner membrane protease subunit 2">
    <location>
        <begin position="1"/>
        <end position="180"/>
    </location>
</feature>
<feature type="transmembrane region" description="Helical" evidence="2">
    <location>
        <begin position="19"/>
        <end position="39"/>
    </location>
</feature>
<feature type="active site" evidence="1">
    <location>
        <position position="46"/>
    </location>
</feature>
<feature type="active site" evidence="1">
    <location>
        <position position="92"/>
    </location>
</feature>
<sequence>MANPFVRNQSFKSVFFKNLVGITLWVPVLMFVEQHVVSVGTIEGRSMKPAFNPETNMLQRDRVLLWKWNKDYKRGDVVILRSPENPEELLVKRVLGVEYDIMKTRPPKKLSLVPVPEGHVWVEGDEQFHSIDSNKFGPVSTGLITAKVIAILFPFSRAGRIDHEGFRKNAVFLSGKRSVK</sequence>
<evidence type="ECO:0000250" key="1"/>
<evidence type="ECO:0000255" key="2"/>
<evidence type="ECO:0000305" key="3"/>
<keyword id="KW-0378">Hydrolase</keyword>
<keyword id="KW-0472">Membrane</keyword>
<keyword id="KW-0496">Mitochondrion</keyword>
<keyword id="KW-0999">Mitochondrion inner membrane</keyword>
<keyword id="KW-0645">Protease</keyword>
<keyword id="KW-1185">Reference proteome</keyword>
<keyword id="KW-0812">Transmembrane</keyword>
<keyword id="KW-1133">Transmembrane helix</keyword>
<comment type="function">
    <text evidence="1">Catalyzes the removal of transit peptides required for the targeting of proteins from the mitochondrial matrix, across the inner membrane, into the inter-membrane space.</text>
</comment>
<comment type="subunit">
    <text evidence="1">Heterodimer of 2 subunits, imp1 and imp2.</text>
</comment>
<comment type="subcellular location">
    <subcellularLocation>
        <location evidence="1">Mitochondrion inner membrane</location>
        <topology evidence="1">Single-pass membrane protein</topology>
    </subcellularLocation>
</comment>
<comment type="similarity">
    <text evidence="3">Belongs to the peptidase S26 family. IMP2 subfamily.</text>
</comment>
<name>IMP2L_SCHPO</name>
<organism>
    <name type="scientific">Schizosaccharomyces pombe (strain 972 / ATCC 24843)</name>
    <name type="common">Fission yeast</name>
    <dbReference type="NCBI Taxonomy" id="284812"/>
    <lineage>
        <taxon>Eukaryota</taxon>
        <taxon>Fungi</taxon>
        <taxon>Dikarya</taxon>
        <taxon>Ascomycota</taxon>
        <taxon>Taphrinomycotina</taxon>
        <taxon>Schizosaccharomycetes</taxon>
        <taxon>Schizosaccharomycetales</taxon>
        <taxon>Schizosaccharomycetaceae</taxon>
        <taxon>Schizosaccharomyces</taxon>
    </lineage>
</organism>
<accession>Q9UST2</accession>
<reference key="1">
    <citation type="journal article" date="2002" name="Nature">
        <title>The genome sequence of Schizosaccharomyces pombe.</title>
        <authorList>
            <person name="Wood V."/>
            <person name="Gwilliam R."/>
            <person name="Rajandream M.A."/>
            <person name="Lyne M.H."/>
            <person name="Lyne R."/>
            <person name="Stewart A."/>
            <person name="Sgouros J.G."/>
            <person name="Peat N."/>
            <person name="Hayles J."/>
            <person name="Baker S.G."/>
            <person name="Basham D."/>
            <person name="Bowman S."/>
            <person name="Brooks K."/>
            <person name="Brown D."/>
            <person name="Brown S."/>
            <person name="Chillingworth T."/>
            <person name="Churcher C.M."/>
            <person name="Collins M."/>
            <person name="Connor R."/>
            <person name="Cronin A."/>
            <person name="Davis P."/>
            <person name="Feltwell T."/>
            <person name="Fraser A."/>
            <person name="Gentles S."/>
            <person name="Goble A."/>
            <person name="Hamlin N."/>
            <person name="Harris D.E."/>
            <person name="Hidalgo J."/>
            <person name="Hodgson G."/>
            <person name="Holroyd S."/>
            <person name="Hornsby T."/>
            <person name="Howarth S."/>
            <person name="Huckle E.J."/>
            <person name="Hunt S."/>
            <person name="Jagels K."/>
            <person name="James K.D."/>
            <person name="Jones L."/>
            <person name="Jones M."/>
            <person name="Leather S."/>
            <person name="McDonald S."/>
            <person name="McLean J."/>
            <person name="Mooney P."/>
            <person name="Moule S."/>
            <person name="Mungall K.L."/>
            <person name="Murphy L.D."/>
            <person name="Niblett D."/>
            <person name="Odell C."/>
            <person name="Oliver K."/>
            <person name="O'Neil S."/>
            <person name="Pearson D."/>
            <person name="Quail M.A."/>
            <person name="Rabbinowitsch E."/>
            <person name="Rutherford K.M."/>
            <person name="Rutter S."/>
            <person name="Saunders D."/>
            <person name="Seeger K."/>
            <person name="Sharp S."/>
            <person name="Skelton J."/>
            <person name="Simmonds M.N."/>
            <person name="Squares R."/>
            <person name="Squares S."/>
            <person name="Stevens K."/>
            <person name="Taylor K."/>
            <person name="Taylor R.G."/>
            <person name="Tivey A."/>
            <person name="Walsh S.V."/>
            <person name="Warren T."/>
            <person name="Whitehead S."/>
            <person name="Woodward J.R."/>
            <person name="Volckaert G."/>
            <person name="Aert R."/>
            <person name="Robben J."/>
            <person name="Grymonprez B."/>
            <person name="Weltjens I."/>
            <person name="Vanstreels E."/>
            <person name="Rieger M."/>
            <person name="Schaefer M."/>
            <person name="Mueller-Auer S."/>
            <person name="Gabel C."/>
            <person name="Fuchs M."/>
            <person name="Duesterhoeft A."/>
            <person name="Fritzc C."/>
            <person name="Holzer E."/>
            <person name="Moestl D."/>
            <person name="Hilbert H."/>
            <person name="Borzym K."/>
            <person name="Langer I."/>
            <person name="Beck A."/>
            <person name="Lehrach H."/>
            <person name="Reinhardt R."/>
            <person name="Pohl T.M."/>
            <person name="Eger P."/>
            <person name="Zimmermann W."/>
            <person name="Wedler H."/>
            <person name="Wambutt R."/>
            <person name="Purnelle B."/>
            <person name="Goffeau A."/>
            <person name="Cadieu E."/>
            <person name="Dreano S."/>
            <person name="Gloux S."/>
            <person name="Lelaure V."/>
            <person name="Mottier S."/>
            <person name="Galibert F."/>
            <person name="Aves S.J."/>
            <person name="Xiang Z."/>
            <person name="Hunt C."/>
            <person name="Moore K."/>
            <person name="Hurst S.M."/>
            <person name="Lucas M."/>
            <person name="Rochet M."/>
            <person name="Gaillardin C."/>
            <person name="Tallada V.A."/>
            <person name="Garzon A."/>
            <person name="Thode G."/>
            <person name="Daga R.R."/>
            <person name="Cruzado L."/>
            <person name="Jimenez J."/>
            <person name="Sanchez M."/>
            <person name="del Rey F."/>
            <person name="Benito J."/>
            <person name="Dominguez A."/>
            <person name="Revuelta J.L."/>
            <person name="Moreno S."/>
            <person name="Armstrong J."/>
            <person name="Forsburg S.L."/>
            <person name="Cerutti L."/>
            <person name="Lowe T."/>
            <person name="McCombie W.R."/>
            <person name="Paulsen I."/>
            <person name="Potashkin J."/>
            <person name="Shpakovski G.V."/>
            <person name="Ussery D."/>
            <person name="Barrell B.G."/>
            <person name="Nurse P."/>
        </authorList>
    </citation>
    <scope>NUCLEOTIDE SEQUENCE [LARGE SCALE GENOMIC DNA]</scope>
    <source>
        <strain>972 / ATCC 24843</strain>
    </source>
</reference>
<proteinExistence type="inferred from homology"/>
<dbReference type="EC" id="3.4.21.-"/>
<dbReference type="EMBL" id="CU329671">
    <property type="protein sequence ID" value="CAB58165.1"/>
    <property type="molecule type" value="Genomic_DNA"/>
</dbReference>
<dbReference type="PIR" id="T40251">
    <property type="entry name" value="T40251"/>
</dbReference>
<dbReference type="SMR" id="Q9UST2"/>
<dbReference type="BioGRID" id="276767">
    <property type="interactions" value="20"/>
</dbReference>
<dbReference type="FunCoup" id="Q9UST2">
    <property type="interactions" value="367"/>
</dbReference>
<dbReference type="STRING" id="284812.Q9UST2"/>
<dbReference type="PaxDb" id="4896-SPBC336.13c.1"/>
<dbReference type="EnsemblFungi" id="SPBC336.13c.1">
    <property type="protein sequence ID" value="SPBC336.13c.1:pep"/>
    <property type="gene ID" value="SPBC336.13c"/>
</dbReference>
<dbReference type="KEGG" id="spo:2540235"/>
<dbReference type="PomBase" id="SPBC336.13c"/>
<dbReference type="VEuPathDB" id="FungiDB:SPBC336.13c"/>
<dbReference type="eggNOG" id="KOG1568">
    <property type="taxonomic scope" value="Eukaryota"/>
</dbReference>
<dbReference type="HOGENOM" id="CLU_028723_4_1_1"/>
<dbReference type="InParanoid" id="Q9UST2"/>
<dbReference type="OMA" id="WIPVIAW"/>
<dbReference type="PhylomeDB" id="Q9UST2"/>
<dbReference type="PRO" id="PR:Q9UST2"/>
<dbReference type="Proteomes" id="UP000002485">
    <property type="component" value="Chromosome II"/>
</dbReference>
<dbReference type="GO" id="GO:0042720">
    <property type="term" value="C:mitochondrial inner membrane peptidase complex"/>
    <property type="evidence" value="ECO:0000318"/>
    <property type="project" value="GO_Central"/>
</dbReference>
<dbReference type="GO" id="GO:0005739">
    <property type="term" value="C:mitochondrion"/>
    <property type="evidence" value="ECO:0007005"/>
    <property type="project" value="PomBase"/>
</dbReference>
<dbReference type="GO" id="GO:0004175">
    <property type="term" value="F:endopeptidase activity"/>
    <property type="evidence" value="ECO:0000318"/>
    <property type="project" value="GO_Central"/>
</dbReference>
<dbReference type="GO" id="GO:0004222">
    <property type="term" value="F:metalloendopeptidase activity"/>
    <property type="evidence" value="ECO:0000250"/>
    <property type="project" value="PomBase"/>
</dbReference>
<dbReference type="GO" id="GO:0004252">
    <property type="term" value="F:serine-type endopeptidase activity"/>
    <property type="evidence" value="ECO:0007669"/>
    <property type="project" value="InterPro"/>
</dbReference>
<dbReference type="GO" id="GO:0006627">
    <property type="term" value="P:protein processing involved in protein targeting to mitochondrion"/>
    <property type="evidence" value="ECO:0000318"/>
    <property type="project" value="GO_Central"/>
</dbReference>
<dbReference type="GO" id="GO:0006465">
    <property type="term" value="P:signal peptide processing"/>
    <property type="evidence" value="ECO:0007669"/>
    <property type="project" value="InterPro"/>
</dbReference>
<dbReference type="CDD" id="cd06530">
    <property type="entry name" value="S26_SPase_I"/>
    <property type="match status" value="1"/>
</dbReference>
<dbReference type="FunFam" id="2.10.109.10:FF:000005">
    <property type="entry name" value="Mitochondrial inner membrane protease subunit"/>
    <property type="match status" value="1"/>
</dbReference>
<dbReference type="Gene3D" id="2.10.109.10">
    <property type="entry name" value="Umud Fragment, subunit A"/>
    <property type="match status" value="1"/>
</dbReference>
<dbReference type="InterPro" id="IPR037730">
    <property type="entry name" value="IMP2"/>
</dbReference>
<dbReference type="InterPro" id="IPR036286">
    <property type="entry name" value="LexA/Signal_pep-like_sf"/>
</dbReference>
<dbReference type="InterPro" id="IPR000223">
    <property type="entry name" value="Pept_S26A_signal_pept_1"/>
</dbReference>
<dbReference type="InterPro" id="IPR019533">
    <property type="entry name" value="Peptidase_S26"/>
</dbReference>
<dbReference type="PANTHER" id="PTHR46041">
    <property type="entry name" value="MITOCHONDRIAL INNER MEMBRANE PROTEASE SUBUNIT 2"/>
    <property type="match status" value="1"/>
</dbReference>
<dbReference type="PANTHER" id="PTHR46041:SF2">
    <property type="entry name" value="MITOCHONDRIAL INNER MEMBRANE PROTEASE SUBUNIT 2"/>
    <property type="match status" value="1"/>
</dbReference>
<dbReference type="Pfam" id="PF10502">
    <property type="entry name" value="Peptidase_S26"/>
    <property type="match status" value="2"/>
</dbReference>
<dbReference type="PRINTS" id="PR00727">
    <property type="entry name" value="LEADERPTASE"/>
</dbReference>
<dbReference type="SUPFAM" id="SSF51306">
    <property type="entry name" value="LexA/Signal peptidase"/>
    <property type="match status" value="1"/>
</dbReference>